<gene>
    <name evidence="1" type="primary">iscS</name>
    <name type="ordered locus">HD_1082</name>
</gene>
<sequence length="406" mass="45607">MKLPIYLDYAATTPMDERVVQKMMQYMTKDGIFGNPASRSHKFGWEAEEAVDIARNHIADLIGADSREIVFTSGATESDNLAIKGAAHFYQTKGKHIITLKTEHKAVLDTCRQLEREGFEVTYLEPESDGLLDLTKLVEAIRPDTILISIMHVNNEIGVVQDIKAIGEICRARKIIFHVDATQSVGKLAVNVQELKVDLMSFSSHKLYGPKGIGGLYVCRKPRIRIEAIIHGGGHERGMRSGTLPVHQIVGMGEAYRIAKEEMATEMPRLKALRDRLYHGFQAIEEVYVNGSMEEGKRVDTNLNMSFNFVEGESLMMALRDIAVSSGSACTSASLEPSYVLRAIGRNDELAHSSIRFSLGRWATEEEIDYTIELVKKSILKLRELSPLWEMFKEGIDLSKIEWNHH</sequence>
<name>ISCS_HAEDU</name>
<protein>
    <recommendedName>
        <fullName evidence="1">Cysteine desulfurase IscS</fullName>
        <ecNumber evidence="1">2.8.1.7</ecNumber>
    </recommendedName>
</protein>
<evidence type="ECO:0000255" key="1">
    <source>
        <dbReference type="HAMAP-Rule" id="MF_00331"/>
    </source>
</evidence>
<reference key="1">
    <citation type="submission" date="2003-06" db="EMBL/GenBank/DDBJ databases">
        <title>The complete genome sequence of Haemophilus ducreyi.</title>
        <authorList>
            <person name="Munson R.S. Jr."/>
            <person name="Ray W.C."/>
            <person name="Mahairas G."/>
            <person name="Sabo P."/>
            <person name="Mungur R."/>
            <person name="Johnson L."/>
            <person name="Nguyen D."/>
            <person name="Wang J."/>
            <person name="Forst C."/>
            <person name="Hood L."/>
        </authorList>
    </citation>
    <scope>NUCLEOTIDE SEQUENCE [LARGE SCALE GENOMIC DNA]</scope>
    <source>
        <strain>35000HP / ATCC 700724</strain>
    </source>
</reference>
<dbReference type="EC" id="2.8.1.7" evidence="1"/>
<dbReference type="EMBL" id="AE017143">
    <property type="protein sequence ID" value="AAP95948.1"/>
    <property type="molecule type" value="Genomic_DNA"/>
</dbReference>
<dbReference type="RefSeq" id="WP_010944997.1">
    <property type="nucleotide sequence ID" value="NC_002940.2"/>
</dbReference>
<dbReference type="SMR" id="Q7VMA9"/>
<dbReference type="STRING" id="233412.HD_1082"/>
<dbReference type="KEGG" id="hdu:HD_1082"/>
<dbReference type="eggNOG" id="COG1104">
    <property type="taxonomic scope" value="Bacteria"/>
</dbReference>
<dbReference type="HOGENOM" id="CLU_003433_0_2_6"/>
<dbReference type="OrthoDB" id="9808002at2"/>
<dbReference type="UniPathway" id="UPA00266"/>
<dbReference type="Proteomes" id="UP000001022">
    <property type="component" value="Chromosome"/>
</dbReference>
<dbReference type="GO" id="GO:1990221">
    <property type="term" value="C:L-cysteine desulfurase complex"/>
    <property type="evidence" value="ECO:0007669"/>
    <property type="project" value="UniProtKB-ARBA"/>
</dbReference>
<dbReference type="GO" id="GO:0051537">
    <property type="term" value="F:2 iron, 2 sulfur cluster binding"/>
    <property type="evidence" value="ECO:0007669"/>
    <property type="project" value="UniProtKB-UniRule"/>
</dbReference>
<dbReference type="GO" id="GO:0031071">
    <property type="term" value="F:cysteine desulfurase activity"/>
    <property type="evidence" value="ECO:0007669"/>
    <property type="project" value="UniProtKB-UniRule"/>
</dbReference>
<dbReference type="GO" id="GO:0046872">
    <property type="term" value="F:metal ion binding"/>
    <property type="evidence" value="ECO:0007669"/>
    <property type="project" value="UniProtKB-KW"/>
</dbReference>
<dbReference type="GO" id="GO:0030170">
    <property type="term" value="F:pyridoxal phosphate binding"/>
    <property type="evidence" value="ECO:0007669"/>
    <property type="project" value="UniProtKB-UniRule"/>
</dbReference>
<dbReference type="GO" id="GO:0044571">
    <property type="term" value="P:[2Fe-2S] cluster assembly"/>
    <property type="evidence" value="ECO:0007669"/>
    <property type="project" value="UniProtKB-UniRule"/>
</dbReference>
<dbReference type="FunFam" id="3.40.640.10:FF:000003">
    <property type="entry name" value="Cysteine desulfurase IscS"/>
    <property type="match status" value="1"/>
</dbReference>
<dbReference type="FunFam" id="3.90.1150.10:FF:000002">
    <property type="entry name" value="Cysteine desulfurase IscS"/>
    <property type="match status" value="1"/>
</dbReference>
<dbReference type="Gene3D" id="3.90.1150.10">
    <property type="entry name" value="Aspartate Aminotransferase, domain 1"/>
    <property type="match status" value="1"/>
</dbReference>
<dbReference type="Gene3D" id="3.40.640.10">
    <property type="entry name" value="Type I PLP-dependent aspartate aminotransferase-like (Major domain)"/>
    <property type="match status" value="1"/>
</dbReference>
<dbReference type="HAMAP" id="MF_00331">
    <property type="entry name" value="Cys_desulf_IscS"/>
    <property type="match status" value="1"/>
</dbReference>
<dbReference type="InterPro" id="IPR000192">
    <property type="entry name" value="Aminotrans_V_dom"/>
</dbReference>
<dbReference type="InterPro" id="IPR020578">
    <property type="entry name" value="Aminotrans_V_PyrdxlP_BS"/>
</dbReference>
<dbReference type="InterPro" id="IPR010240">
    <property type="entry name" value="Cys_deSase_IscS"/>
</dbReference>
<dbReference type="InterPro" id="IPR016454">
    <property type="entry name" value="Cysteine_dSase"/>
</dbReference>
<dbReference type="InterPro" id="IPR015424">
    <property type="entry name" value="PyrdxlP-dep_Trfase"/>
</dbReference>
<dbReference type="InterPro" id="IPR015421">
    <property type="entry name" value="PyrdxlP-dep_Trfase_major"/>
</dbReference>
<dbReference type="InterPro" id="IPR015422">
    <property type="entry name" value="PyrdxlP-dep_Trfase_small"/>
</dbReference>
<dbReference type="NCBIfam" id="TIGR02006">
    <property type="entry name" value="IscS"/>
    <property type="match status" value="1"/>
</dbReference>
<dbReference type="NCBIfam" id="NF002806">
    <property type="entry name" value="PRK02948.1"/>
    <property type="match status" value="1"/>
</dbReference>
<dbReference type="NCBIfam" id="NF010611">
    <property type="entry name" value="PRK14012.1"/>
    <property type="match status" value="1"/>
</dbReference>
<dbReference type="PANTHER" id="PTHR11601:SF34">
    <property type="entry name" value="CYSTEINE DESULFURASE"/>
    <property type="match status" value="1"/>
</dbReference>
<dbReference type="PANTHER" id="PTHR11601">
    <property type="entry name" value="CYSTEINE DESULFURYLASE FAMILY MEMBER"/>
    <property type="match status" value="1"/>
</dbReference>
<dbReference type="Pfam" id="PF00266">
    <property type="entry name" value="Aminotran_5"/>
    <property type="match status" value="1"/>
</dbReference>
<dbReference type="PIRSF" id="PIRSF005572">
    <property type="entry name" value="NifS"/>
    <property type="match status" value="1"/>
</dbReference>
<dbReference type="SUPFAM" id="SSF53383">
    <property type="entry name" value="PLP-dependent transferases"/>
    <property type="match status" value="1"/>
</dbReference>
<dbReference type="PROSITE" id="PS00595">
    <property type="entry name" value="AA_TRANSFER_CLASS_5"/>
    <property type="match status" value="1"/>
</dbReference>
<keyword id="KW-0001">2Fe-2S</keyword>
<keyword id="KW-0963">Cytoplasm</keyword>
<keyword id="KW-0408">Iron</keyword>
<keyword id="KW-0411">Iron-sulfur</keyword>
<keyword id="KW-0479">Metal-binding</keyword>
<keyword id="KW-0663">Pyridoxal phosphate</keyword>
<keyword id="KW-1185">Reference proteome</keyword>
<keyword id="KW-0808">Transferase</keyword>
<accession>Q7VMA9</accession>
<organism>
    <name type="scientific">Haemophilus ducreyi (strain 35000HP / ATCC 700724)</name>
    <dbReference type="NCBI Taxonomy" id="233412"/>
    <lineage>
        <taxon>Bacteria</taxon>
        <taxon>Pseudomonadati</taxon>
        <taxon>Pseudomonadota</taxon>
        <taxon>Gammaproteobacteria</taxon>
        <taxon>Pasteurellales</taxon>
        <taxon>Pasteurellaceae</taxon>
        <taxon>Haemophilus</taxon>
    </lineage>
</organism>
<proteinExistence type="inferred from homology"/>
<comment type="function">
    <text evidence="1">Master enzyme that delivers sulfur to a number of partners involved in Fe-S cluster assembly, tRNA modification or cofactor biosynthesis. Catalyzes the removal of elemental sulfur atoms from cysteine to produce alanine. Functions as a sulfur delivery protein for Fe-S cluster synthesis onto IscU, an Fe-S scaffold assembly protein, as well as other S acceptor proteins.</text>
</comment>
<comment type="catalytic activity">
    <reaction evidence="1">
        <text>(sulfur carrier)-H + L-cysteine = (sulfur carrier)-SH + L-alanine</text>
        <dbReference type="Rhea" id="RHEA:43892"/>
        <dbReference type="Rhea" id="RHEA-COMP:14737"/>
        <dbReference type="Rhea" id="RHEA-COMP:14739"/>
        <dbReference type="ChEBI" id="CHEBI:29917"/>
        <dbReference type="ChEBI" id="CHEBI:35235"/>
        <dbReference type="ChEBI" id="CHEBI:57972"/>
        <dbReference type="ChEBI" id="CHEBI:64428"/>
        <dbReference type="EC" id="2.8.1.7"/>
    </reaction>
</comment>
<comment type="cofactor">
    <cofactor evidence="1">
        <name>pyridoxal 5'-phosphate</name>
        <dbReference type="ChEBI" id="CHEBI:597326"/>
    </cofactor>
</comment>
<comment type="pathway">
    <text evidence="1">Cofactor biosynthesis; iron-sulfur cluster biosynthesis.</text>
</comment>
<comment type="subunit">
    <text evidence="1">Homodimer. Forms a heterotetramer with IscU, interacts with other sulfur acceptors.</text>
</comment>
<comment type="subcellular location">
    <subcellularLocation>
        <location evidence="1">Cytoplasm</location>
    </subcellularLocation>
</comment>
<comment type="similarity">
    <text evidence="1">Belongs to the class-V pyridoxal-phosphate-dependent aminotransferase family. NifS/IscS subfamily.</text>
</comment>
<feature type="chain" id="PRO_0000150267" description="Cysteine desulfurase IscS">
    <location>
        <begin position="1"/>
        <end position="406"/>
    </location>
</feature>
<feature type="active site" description="Cysteine persulfide intermediate" evidence="1">
    <location>
        <position position="330"/>
    </location>
</feature>
<feature type="binding site" evidence="1">
    <location>
        <begin position="75"/>
        <end position="76"/>
    </location>
    <ligand>
        <name>pyridoxal 5'-phosphate</name>
        <dbReference type="ChEBI" id="CHEBI:597326"/>
    </ligand>
</feature>
<feature type="binding site" evidence="1">
    <location>
        <position position="155"/>
    </location>
    <ligand>
        <name>pyridoxal 5'-phosphate</name>
        <dbReference type="ChEBI" id="CHEBI:597326"/>
    </ligand>
</feature>
<feature type="binding site" evidence="1">
    <location>
        <position position="183"/>
    </location>
    <ligand>
        <name>pyridoxal 5'-phosphate</name>
        <dbReference type="ChEBI" id="CHEBI:597326"/>
    </ligand>
</feature>
<feature type="binding site" evidence="1">
    <location>
        <begin position="203"/>
        <end position="205"/>
    </location>
    <ligand>
        <name>pyridoxal 5'-phosphate</name>
        <dbReference type="ChEBI" id="CHEBI:597326"/>
    </ligand>
</feature>
<feature type="binding site" evidence="1">
    <location>
        <position position="243"/>
    </location>
    <ligand>
        <name>pyridoxal 5'-phosphate</name>
        <dbReference type="ChEBI" id="CHEBI:597326"/>
    </ligand>
</feature>
<feature type="binding site" description="via persulfide group" evidence="1">
    <location>
        <position position="330"/>
    </location>
    <ligand>
        <name>[2Fe-2S] cluster</name>
        <dbReference type="ChEBI" id="CHEBI:190135"/>
        <note>ligand shared with IscU</note>
    </ligand>
</feature>
<feature type="modified residue" description="N6-(pyridoxal phosphate)lysine" evidence="1">
    <location>
        <position position="206"/>
    </location>
</feature>